<protein>
    <recommendedName>
        <fullName evidence="2">Large ribosomal subunit protein bL20</fullName>
    </recommendedName>
    <alternativeName>
        <fullName>50S ribosomal protein L20</fullName>
    </alternativeName>
</protein>
<accession>P9WHC5</accession>
<accession>L0TA82</accession>
<accession>P66105</accession>
<accession>P94977</accession>
<reference key="1">
    <citation type="journal article" date="1998" name="Nature">
        <title>Deciphering the biology of Mycobacterium tuberculosis from the complete genome sequence.</title>
        <authorList>
            <person name="Cole S.T."/>
            <person name="Brosch R."/>
            <person name="Parkhill J."/>
            <person name="Garnier T."/>
            <person name="Churcher C.M."/>
            <person name="Harris D.E."/>
            <person name="Gordon S.V."/>
            <person name="Eiglmeier K."/>
            <person name="Gas S."/>
            <person name="Barry C.E. III"/>
            <person name="Tekaia F."/>
            <person name="Badcock K."/>
            <person name="Basham D."/>
            <person name="Brown D."/>
            <person name="Chillingworth T."/>
            <person name="Connor R."/>
            <person name="Davies R.M."/>
            <person name="Devlin K."/>
            <person name="Feltwell T."/>
            <person name="Gentles S."/>
            <person name="Hamlin N."/>
            <person name="Holroyd S."/>
            <person name="Hornsby T."/>
            <person name="Jagels K."/>
            <person name="Krogh A."/>
            <person name="McLean J."/>
            <person name="Moule S."/>
            <person name="Murphy L.D."/>
            <person name="Oliver S."/>
            <person name="Osborne J."/>
            <person name="Quail M.A."/>
            <person name="Rajandream M.A."/>
            <person name="Rogers J."/>
            <person name="Rutter S."/>
            <person name="Seeger K."/>
            <person name="Skelton S."/>
            <person name="Squares S."/>
            <person name="Squares R."/>
            <person name="Sulston J.E."/>
            <person name="Taylor K."/>
            <person name="Whitehead S."/>
            <person name="Barrell B.G."/>
        </authorList>
    </citation>
    <scope>NUCLEOTIDE SEQUENCE [LARGE SCALE GENOMIC DNA]</scope>
    <source>
        <strain>ATCC 25618 / H37Rv</strain>
    </source>
</reference>
<reference key="2">
    <citation type="journal article" date="2011" name="Mol. Cell. Proteomics">
        <title>Proteogenomic analysis of Mycobacterium tuberculosis by high resolution mass spectrometry.</title>
        <authorList>
            <person name="Kelkar D.S."/>
            <person name="Kumar D."/>
            <person name="Kumar P."/>
            <person name="Balakrishnan L."/>
            <person name="Muthusamy B."/>
            <person name="Yadav A.K."/>
            <person name="Shrivastava P."/>
            <person name="Marimuthu A."/>
            <person name="Anand S."/>
            <person name="Sundaram H."/>
            <person name="Kingsbury R."/>
            <person name="Harsha H.C."/>
            <person name="Nair B."/>
            <person name="Prasad T.S."/>
            <person name="Chauhan D.S."/>
            <person name="Katoch K."/>
            <person name="Katoch V.M."/>
            <person name="Kumar P."/>
            <person name="Chaerkady R."/>
            <person name="Ramachandran S."/>
            <person name="Dash D."/>
            <person name="Pandey A."/>
        </authorList>
    </citation>
    <scope>IDENTIFICATION BY MASS SPECTROMETRY [LARGE SCALE ANALYSIS]</scope>
    <source>
        <strain>ATCC 25618 / H37Rv</strain>
    </source>
</reference>
<sequence>MARVKRAVNAHKKRRSILKASRGYRGQRSRLYRKAKEQQLHSLNYAYRDRRARKGEFRKLWIARINAAARLNDITYNRLIQGLKAAGVEVDRKNLADIAISDPAAFTALVDVARAALPEDVNAPSGEAA</sequence>
<gene>
    <name type="primary">rplT</name>
    <name type="ordered locus">Rv1643</name>
    <name type="ORF">MTCY06H11.07</name>
</gene>
<feature type="chain" id="PRO_0000177190" description="Large ribosomal subunit protein bL20">
    <location>
        <begin position="1"/>
        <end position="129"/>
    </location>
</feature>
<organism>
    <name type="scientific">Mycobacterium tuberculosis (strain ATCC 25618 / H37Rv)</name>
    <dbReference type="NCBI Taxonomy" id="83332"/>
    <lineage>
        <taxon>Bacteria</taxon>
        <taxon>Bacillati</taxon>
        <taxon>Actinomycetota</taxon>
        <taxon>Actinomycetes</taxon>
        <taxon>Mycobacteriales</taxon>
        <taxon>Mycobacteriaceae</taxon>
        <taxon>Mycobacterium</taxon>
        <taxon>Mycobacterium tuberculosis complex</taxon>
    </lineage>
</organism>
<name>RL20_MYCTU</name>
<proteinExistence type="evidence at protein level"/>
<keyword id="KW-0002">3D-structure</keyword>
<keyword id="KW-1185">Reference proteome</keyword>
<keyword id="KW-0687">Ribonucleoprotein</keyword>
<keyword id="KW-0689">Ribosomal protein</keyword>
<keyword id="KW-0694">RNA-binding</keyword>
<keyword id="KW-0699">rRNA-binding</keyword>
<evidence type="ECO:0000250" key="1"/>
<evidence type="ECO:0000305" key="2"/>
<dbReference type="EMBL" id="AL123456">
    <property type="protein sequence ID" value="CCP44408.1"/>
    <property type="molecule type" value="Genomic_DNA"/>
</dbReference>
<dbReference type="PIR" id="F70619">
    <property type="entry name" value="F70619"/>
</dbReference>
<dbReference type="RefSeq" id="NP_216159.1">
    <property type="nucleotide sequence ID" value="NC_000962.3"/>
</dbReference>
<dbReference type="RefSeq" id="WP_003408108.1">
    <property type="nucleotide sequence ID" value="NZ_NVQJ01000016.1"/>
</dbReference>
<dbReference type="PDB" id="5V7Q">
    <property type="method" value="EM"/>
    <property type="resolution" value="3.70 A"/>
    <property type="chains" value="Q=1-129"/>
</dbReference>
<dbReference type="PDB" id="5V93">
    <property type="method" value="EM"/>
    <property type="resolution" value="4.00 A"/>
    <property type="chains" value="Q=1-129"/>
</dbReference>
<dbReference type="PDB" id="7KGB">
    <property type="method" value="EM"/>
    <property type="resolution" value="2.70 A"/>
    <property type="chains" value="Q=1-129"/>
</dbReference>
<dbReference type="PDB" id="7MSC">
    <property type="method" value="EM"/>
    <property type="resolution" value="2.97 A"/>
    <property type="chains" value="Q=1-129"/>
</dbReference>
<dbReference type="PDB" id="7MSH">
    <property type="method" value="EM"/>
    <property type="resolution" value="3.23 A"/>
    <property type="chains" value="Q=1-129"/>
</dbReference>
<dbReference type="PDB" id="7MSM">
    <property type="method" value="EM"/>
    <property type="resolution" value="2.79 A"/>
    <property type="chains" value="Q=1-129"/>
</dbReference>
<dbReference type="PDB" id="7MSZ">
    <property type="method" value="EM"/>
    <property type="resolution" value="3.10 A"/>
    <property type="chains" value="Q=1-129"/>
</dbReference>
<dbReference type="PDB" id="7MT2">
    <property type="method" value="EM"/>
    <property type="resolution" value="2.76 A"/>
    <property type="chains" value="Q=1-129"/>
</dbReference>
<dbReference type="PDB" id="7MT3">
    <property type="method" value="EM"/>
    <property type="resolution" value="2.80 A"/>
    <property type="chains" value="Q=1-129"/>
</dbReference>
<dbReference type="PDB" id="7MT7">
    <property type="method" value="EM"/>
    <property type="resolution" value="2.71 A"/>
    <property type="chains" value="Q=1-129"/>
</dbReference>
<dbReference type="PDB" id="7SFR">
    <property type="method" value="EM"/>
    <property type="resolution" value="2.60 A"/>
    <property type="chains" value="Q=1-129"/>
</dbReference>
<dbReference type="PDBsum" id="5V7Q"/>
<dbReference type="PDBsum" id="5V93"/>
<dbReference type="PDBsum" id="7KGB"/>
<dbReference type="PDBsum" id="7MSC"/>
<dbReference type="PDBsum" id="7MSH"/>
<dbReference type="PDBsum" id="7MSM"/>
<dbReference type="PDBsum" id="7MSZ"/>
<dbReference type="PDBsum" id="7MT2"/>
<dbReference type="PDBsum" id="7MT3"/>
<dbReference type="PDBsum" id="7MT7"/>
<dbReference type="PDBsum" id="7SFR"/>
<dbReference type="EMDB" id="EMD-22865"/>
<dbReference type="EMDB" id="EMD-23961"/>
<dbReference type="EMDB" id="EMD-23962"/>
<dbReference type="EMDB" id="EMD-23969"/>
<dbReference type="EMDB" id="EMD-23972"/>
<dbReference type="EMDB" id="EMD-23974"/>
<dbReference type="EMDB" id="EMD-23975"/>
<dbReference type="EMDB" id="EMD-23976"/>
<dbReference type="EMDB" id="EMD-8645"/>
<dbReference type="SMR" id="P9WHC5"/>
<dbReference type="FunCoup" id="P9WHC5">
    <property type="interactions" value="340"/>
</dbReference>
<dbReference type="STRING" id="83332.Rv1643"/>
<dbReference type="PaxDb" id="83332-Rv1643"/>
<dbReference type="DNASU" id="885455"/>
<dbReference type="GeneID" id="45425613"/>
<dbReference type="GeneID" id="885455"/>
<dbReference type="KEGG" id="mtu:Rv1643"/>
<dbReference type="KEGG" id="mtv:RVBD_1643"/>
<dbReference type="TubercuList" id="Rv1643"/>
<dbReference type="eggNOG" id="COG0292">
    <property type="taxonomic scope" value="Bacteria"/>
</dbReference>
<dbReference type="InParanoid" id="P9WHC5"/>
<dbReference type="OrthoDB" id="9808966at2"/>
<dbReference type="PhylomeDB" id="P9WHC5"/>
<dbReference type="PRO" id="PR:P9WHC5"/>
<dbReference type="Proteomes" id="UP000001584">
    <property type="component" value="Chromosome"/>
</dbReference>
<dbReference type="GO" id="GO:0022625">
    <property type="term" value="C:cytosolic large ribosomal subunit"/>
    <property type="evidence" value="ECO:0000318"/>
    <property type="project" value="GO_Central"/>
</dbReference>
<dbReference type="GO" id="GO:0005886">
    <property type="term" value="C:plasma membrane"/>
    <property type="evidence" value="ECO:0007005"/>
    <property type="project" value="MTBBASE"/>
</dbReference>
<dbReference type="GO" id="GO:0019843">
    <property type="term" value="F:rRNA binding"/>
    <property type="evidence" value="ECO:0007669"/>
    <property type="project" value="UniProtKB-UniRule"/>
</dbReference>
<dbReference type="GO" id="GO:0003735">
    <property type="term" value="F:structural constituent of ribosome"/>
    <property type="evidence" value="ECO:0000318"/>
    <property type="project" value="GO_Central"/>
</dbReference>
<dbReference type="GO" id="GO:0000027">
    <property type="term" value="P:ribosomal large subunit assembly"/>
    <property type="evidence" value="ECO:0007669"/>
    <property type="project" value="UniProtKB-UniRule"/>
</dbReference>
<dbReference type="GO" id="GO:0006412">
    <property type="term" value="P:translation"/>
    <property type="evidence" value="ECO:0007669"/>
    <property type="project" value="InterPro"/>
</dbReference>
<dbReference type="CDD" id="cd07026">
    <property type="entry name" value="Ribosomal_L20"/>
    <property type="match status" value="1"/>
</dbReference>
<dbReference type="FunFam" id="1.10.1900.20:FF:000001">
    <property type="entry name" value="50S ribosomal protein L20"/>
    <property type="match status" value="1"/>
</dbReference>
<dbReference type="Gene3D" id="6.10.160.10">
    <property type="match status" value="1"/>
</dbReference>
<dbReference type="Gene3D" id="1.10.1900.20">
    <property type="entry name" value="Ribosomal protein L20"/>
    <property type="match status" value="1"/>
</dbReference>
<dbReference type="HAMAP" id="MF_00382">
    <property type="entry name" value="Ribosomal_bL20"/>
    <property type="match status" value="1"/>
</dbReference>
<dbReference type="InterPro" id="IPR005813">
    <property type="entry name" value="Ribosomal_bL20"/>
</dbReference>
<dbReference type="InterPro" id="IPR049946">
    <property type="entry name" value="RIBOSOMAL_L20_CS"/>
</dbReference>
<dbReference type="InterPro" id="IPR035566">
    <property type="entry name" value="Ribosomal_protein_bL20_C"/>
</dbReference>
<dbReference type="NCBIfam" id="TIGR01032">
    <property type="entry name" value="rplT_bact"/>
    <property type="match status" value="1"/>
</dbReference>
<dbReference type="PANTHER" id="PTHR10986">
    <property type="entry name" value="39S RIBOSOMAL PROTEIN L20"/>
    <property type="match status" value="1"/>
</dbReference>
<dbReference type="Pfam" id="PF00453">
    <property type="entry name" value="Ribosomal_L20"/>
    <property type="match status" value="1"/>
</dbReference>
<dbReference type="PRINTS" id="PR00062">
    <property type="entry name" value="RIBOSOMALL20"/>
</dbReference>
<dbReference type="SUPFAM" id="SSF74731">
    <property type="entry name" value="Ribosomal protein L20"/>
    <property type="match status" value="1"/>
</dbReference>
<dbReference type="PROSITE" id="PS00937">
    <property type="entry name" value="RIBOSOMAL_L20"/>
    <property type="match status" value="1"/>
</dbReference>
<comment type="function">
    <text evidence="1">Binds directly to 23S ribosomal RNA and is necessary for the in vitro assembly process of the 50S ribosomal subunit. It is not involved in the protein synthesizing functions of that subunit (By similarity).</text>
</comment>
<comment type="similarity">
    <text evidence="2">Belongs to the bacterial ribosomal protein bL20 family.</text>
</comment>